<sequence>MNNPNIVPPHFNQHQQQNHNQNQPPHHMNNPNIIPPPQRFNNSNVVPHFNQLSNQNQPPQRPQY</sequence>
<name>Y1925_DICDI</name>
<feature type="chain" id="PRO_0000344395" description="Putative uncharacterized protein DDB_G0293418">
    <location>
        <begin position="1"/>
        <end position="64"/>
    </location>
</feature>
<feature type="region of interest" description="Disordered" evidence="1">
    <location>
        <begin position="1"/>
        <end position="64"/>
    </location>
</feature>
<feature type="compositionally biased region" description="Low complexity" evidence="1">
    <location>
        <begin position="8"/>
        <end position="32"/>
    </location>
</feature>
<gene>
    <name type="ORF">DDB_G0293418</name>
</gene>
<keyword id="KW-1185">Reference proteome</keyword>
<reference key="1">
    <citation type="journal article" date="2005" name="Nature">
        <title>The genome of the social amoeba Dictyostelium discoideum.</title>
        <authorList>
            <person name="Eichinger L."/>
            <person name="Pachebat J.A."/>
            <person name="Gloeckner G."/>
            <person name="Rajandream M.A."/>
            <person name="Sucgang R."/>
            <person name="Berriman M."/>
            <person name="Song J."/>
            <person name="Olsen R."/>
            <person name="Szafranski K."/>
            <person name="Xu Q."/>
            <person name="Tunggal B."/>
            <person name="Kummerfeld S."/>
            <person name="Madera M."/>
            <person name="Konfortov B.A."/>
            <person name="Rivero F."/>
            <person name="Bankier A.T."/>
            <person name="Lehmann R."/>
            <person name="Hamlin N."/>
            <person name="Davies R."/>
            <person name="Gaudet P."/>
            <person name="Fey P."/>
            <person name="Pilcher K."/>
            <person name="Chen G."/>
            <person name="Saunders D."/>
            <person name="Sodergren E.J."/>
            <person name="Davis P."/>
            <person name="Kerhornou A."/>
            <person name="Nie X."/>
            <person name="Hall N."/>
            <person name="Anjard C."/>
            <person name="Hemphill L."/>
            <person name="Bason N."/>
            <person name="Farbrother P."/>
            <person name="Desany B."/>
            <person name="Just E."/>
            <person name="Morio T."/>
            <person name="Rost R."/>
            <person name="Churcher C.M."/>
            <person name="Cooper J."/>
            <person name="Haydock S."/>
            <person name="van Driessche N."/>
            <person name="Cronin A."/>
            <person name="Goodhead I."/>
            <person name="Muzny D.M."/>
            <person name="Mourier T."/>
            <person name="Pain A."/>
            <person name="Lu M."/>
            <person name="Harper D."/>
            <person name="Lindsay R."/>
            <person name="Hauser H."/>
            <person name="James K.D."/>
            <person name="Quiles M."/>
            <person name="Madan Babu M."/>
            <person name="Saito T."/>
            <person name="Buchrieser C."/>
            <person name="Wardroper A."/>
            <person name="Felder M."/>
            <person name="Thangavelu M."/>
            <person name="Johnson D."/>
            <person name="Knights A."/>
            <person name="Loulseged H."/>
            <person name="Mungall K.L."/>
            <person name="Oliver K."/>
            <person name="Price C."/>
            <person name="Quail M.A."/>
            <person name="Urushihara H."/>
            <person name="Hernandez J."/>
            <person name="Rabbinowitsch E."/>
            <person name="Steffen D."/>
            <person name="Sanders M."/>
            <person name="Ma J."/>
            <person name="Kohara Y."/>
            <person name="Sharp S."/>
            <person name="Simmonds M.N."/>
            <person name="Spiegler S."/>
            <person name="Tivey A."/>
            <person name="Sugano S."/>
            <person name="White B."/>
            <person name="Walker D."/>
            <person name="Woodward J.R."/>
            <person name="Winckler T."/>
            <person name="Tanaka Y."/>
            <person name="Shaulsky G."/>
            <person name="Schleicher M."/>
            <person name="Weinstock G.M."/>
            <person name="Rosenthal A."/>
            <person name="Cox E.C."/>
            <person name="Chisholm R.L."/>
            <person name="Gibbs R.A."/>
            <person name="Loomis W.F."/>
            <person name="Platzer M."/>
            <person name="Kay R.R."/>
            <person name="Williams J.G."/>
            <person name="Dear P.H."/>
            <person name="Noegel A.A."/>
            <person name="Barrell B.G."/>
            <person name="Kuspa A."/>
        </authorList>
    </citation>
    <scope>NUCLEOTIDE SEQUENCE [LARGE SCALE GENOMIC DNA]</scope>
    <source>
        <strain>AX4</strain>
    </source>
</reference>
<dbReference type="EMBL" id="AAFI02000208">
    <property type="protein sequence ID" value="EAL60730.1"/>
    <property type="molecule type" value="Genomic_DNA"/>
</dbReference>
<dbReference type="RefSeq" id="XP_629142.1">
    <property type="nucleotide sequence ID" value="XM_629140.1"/>
</dbReference>
<dbReference type="PaxDb" id="44689-DDB0191925"/>
<dbReference type="EnsemblProtists" id="EAL60730">
    <property type="protein sequence ID" value="EAL60730"/>
    <property type="gene ID" value="DDB_G0293418"/>
</dbReference>
<dbReference type="GeneID" id="8629213"/>
<dbReference type="KEGG" id="ddi:DDB_G0293418"/>
<dbReference type="dictyBase" id="DDB_G0293418"/>
<dbReference type="HOGENOM" id="CLU_2872326_0_0_1"/>
<dbReference type="InParanoid" id="Q54BU6"/>
<dbReference type="PRO" id="PR:Q54BU6"/>
<dbReference type="Proteomes" id="UP000002195">
    <property type="component" value="Chromosome 6"/>
</dbReference>
<proteinExistence type="predicted"/>
<protein>
    <recommendedName>
        <fullName>Putative uncharacterized protein DDB_G0293418</fullName>
    </recommendedName>
</protein>
<accession>Q54BU6</accession>
<evidence type="ECO:0000256" key="1">
    <source>
        <dbReference type="SAM" id="MobiDB-lite"/>
    </source>
</evidence>
<organism>
    <name type="scientific">Dictyostelium discoideum</name>
    <name type="common">Social amoeba</name>
    <dbReference type="NCBI Taxonomy" id="44689"/>
    <lineage>
        <taxon>Eukaryota</taxon>
        <taxon>Amoebozoa</taxon>
        <taxon>Evosea</taxon>
        <taxon>Eumycetozoa</taxon>
        <taxon>Dictyostelia</taxon>
        <taxon>Dictyosteliales</taxon>
        <taxon>Dictyosteliaceae</taxon>
        <taxon>Dictyostelium</taxon>
    </lineage>
</organism>